<gene>
    <name evidence="6" type="primary">PhomF'</name>
    <name evidence="5" type="synonym">PhomF</name>
</gene>
<name>PHOF2_DIALO</name>
<feature type="chain" id="PRO_0000458395" description="Short-chain dehydrogenase/reductase PhomF'">
    <location>
        <begin position="1"/>
        <end position="293"/>
    </location>
</feature>
<feature type="active site" description="Proton donor" evidence="2">
    <location>
        <position position="175"/>
    </location>
</feature>
<feature type="active site" description="Proton acceptor" evidence="3">
    <location>
        <position position="190"/>
    </location>
</feature>
<feature type="active site" description="Lowers pKa of active site Tyr" evidence="2">
    <location>
        <position position="194"/>
    </location>
</feature>
<feature type="binding site" evidence="1">
    <location>
        <position position="31"/>
    </location>
    <ligand>
        <name>NADP(+)</name>
        <dbReference type="ChEBI" id="CHEBI:58349"/>
    </ligand>
</feature>
<feature type="binding site" evidence="2">
    <location>
        <position position="102"/>
    </location>
    <ligand>
        <name>NADP(+)</name>
        <dbReference type="ChEBI" id="CHEBI:58349"/>
    </ligand>
</feature>
<feature type="binding site" evidence="2">
    <location>
        <position position="190"/>
    </location>
    <ligand>
        <name>NADP(+)</name>
        <dbReference type="ChEBI" id="CHEBI:58349"/>
    </ligand>
</feature>
<feature type="binding site" evidence="2">
    <location>
        <position position="194"/>
    </location>
    <ligand>
        <name>NADP(+)</name>
        <dbReference type="ChEBI" id="CHEBI:58349"/>
    </ligand>
</feature>
<feature type="binding site" evidence="1">
    <location>
        <position position="225"/>
    </location>
    <ligand>
        <name>NADP(+)</name>
        <dbReference type="ChEBI" id="CHEBI:58349"/>
    </ligand>
</feature>
<sequence>MSSSITPSLIAADLFSVDRLVAVVTGGATGIGLMIVKALEENGAKVYIIGRRKEVLDKVAKEEAKHGNIIPLQGDASSKPDLERIVAHITKETGYINLLVANAGISGPDPVRITPSTTLSELQRDLWSLDPSIFAQTFSVNVGTAYFSIAAFLPLLDAGNHKGNVVQSSQAIITSSIGAFGRVPLAHYAYSASKAAVTHMTKQFATALTKYKIRFNILAPGLYPSEMTAGIVKSFEQLSPEERATRVSPLGREGNTEDMAGCILWLASKAGAWLSGNVVVSDGGKLSVTPSSY</sequence>
<keyword id="KW-0521">NADP</keyword>
<keyword id="KW-0560">Oxidoreductase</keyword>
<keyword id="KW-0843">Virulence</keyword>
<dbReference type="EC" id="1.-.-.-" evidence="8"/>
<dbReference type="EMBL" id="KU645830">
    <property type="protein sequence ID" value="AMR44278.1"/>
    <property type="molecule type" value="Genomic_DNA"/>
</dbReference>
<dbReference type="SMR" id="A0A142I726"/>
<dbReference type="GO" id="GO:0016491">
    <property type="term" value="F:oxidoreductase activity"/>
    <property type="evidence" value="ECO:0007669"/>
    <property type="project" value="UniProtKB-KW"/>
</dbReference>
<dbReference type="CDD" id="cd05233">
    <property type="entry name" value="SDR_c"/>
    <property type="match status" value="1"/>
</dbReference>
<dbReference type="Gene3D" id="3.40.50.720">
    <property type="entry name" value="NAD(P)-binding Rossmann-like Domain"/>
    <property type="match status" value="1"/>
</dbReference>
<dbReference type="InterPro" id="IPR036291">
    <property type="entry name" value="NAD(P)-bd_dom_sf"/>
</dbReference>
<dbReference type="InterPro" id="IPR020904">
    <property type="entry name" value="Sc_DH/Rdtase_CS"/>
</dbReference>
<dbReference type="InterPro" id="IPR002347">
    <property type="entry name" value="SDR_fam"/>
</dbReference>
<dbReference type="InterPro" id="IPR052178">
    <property type="entry name" value="Sec_Metab_Biosynth_SDR"/>
</dbReference>
<dbReference type="PANTHER" id="PTHR43618">
    <property type="entry name" value="7-ALPHA-HYDROXYSTEROID DEHYDROGENASE"/>
    <property type="match status" value="1"/>
</dbReference>
<dbReference type="PANTHER" id="PTHR43618:SF18">
    <property type="entry name" value="SHORT CHAIN DEHYDROGENASE_REDUCTASE FAMILY (AFU_ORTHOLOGUE AFUA_5G12480)"/>
    <property type="match status" value="1"/>
</dbReference>
<dbReference type="Pfam" id="PF13561">
    <property type="entry name" value="adh_short_C2"/>
    <property type="match status" value="1"/>
</dbReference>
<dbReference type="PRINTS" id="PR00081">
    <property type="entry name" value="GDHRDH"/>
</dbReference>
<dbReference type="PRINTS" id="PR00080">
    <property type="entry name" value="SDRFAMILY"/>
</dbReference>
<dbReference type="SUPFAM" id="SSF51735">
    <property type="entry name" value="NAD(P)-binding Rossmann-fold domains"/>
    <property type="match status" value="1"/>
</dbReference>
<dbReference type="PROSITE" id="PS00061">
    <property type="entry name" value="ADH_SHORT"/>
    <property type="match status" value="1"/>
</dbReference>
<comment type="function">
    <text evidence="4 9">Short-chain dehydrogenase/reductase; part of the gene cluster that mediates the biosynthesis of the phomopsins, a group of hexapeptide mycotoxins which infects lupins and causes lupinosis disease in livestock (PubMed:34608734). The role of phomF' within the phomopsins biosynthesis pathway has still to be determined (Probable). The pathway starts with the processing of the precursor phomA by several endopeptidases including kexin proteases as well as the cluster-specific S41 family peptidase phomP1 and the oligopeptidase phomG to produce 10 identical copies of the hexapeptide Tyr-Val-Ile-Pro-Ile-Asp. After being excised from the precursor peptide, the core peptides are cyclized and modified post-translationally by enzymes encoded within the gene cluster. The timing and order of proteolysis of the phomA precursor and PTMs are still unknown. Two tyrosinase-like enzymes, phomQ1 and phomQ2, catalyze the chlorination and hydroxylation of Tyr, respectively. PhomYb, is proposed to be involved in the construction of the macrocyclic structure. The other 4 ustYa family proteins may be involved in PTMs that generate the unique structure of phomopsin A. PhomYa is required for the hydroxylation of C-beta of Tyr. PhomYc, phomYd, and phomYe are responsible for the biosynthesis of 2,3-dehydroisoleucine (dIle), 2,3-dehydroaspartic acid (dAsp), and 3,4-dehydroproline (dPro), respectively. While dIle formation by phomYc is indispensable for the installation of dAsp by phomYd, the order of the other PTMs have not been elucidated yet. Most of the biosynthetic enzymes likely have broad substrate specificity, and thus, there might be a metabolic grid from a precursor to phomopsin A. The enzyme(s) responsible for the biosynthesis of 3,4-dehydrovaline (dVal) have also not been identified yet. Finally, phomM acts as an S-adenosylmethionine-dependent alpha-N-methyltransferase that catalyzes two successive N-methylation reactions, converting N-desmethyl-phomopsin A to phomopsin A and phomopsin A further to an N,N-dimethylated congener called phomopsin E (Probable).</text>
</comment>
<comment type="similarity">
    <text evidence="7">Belongs to the short-chain dehydrogenases/reductases (SDR) family.</text>
</comment>
<reference key="1">
    <citation type="journal article" date="2016" name="Proc. Natl. Acad. Sci. U.S.A.">
        <title>Biosynthetic investigation of phomopsins reveals a widespread pathway for ribosomal natural products in Ascomycetes.</title>
        <authorList>
            <person name="Ding W."/>
            <person name="Liu W.Q."/>
            <person name="Jia Y."/>
            <person name="Li Y."/>
            <person name="van der Donk W.A."/>
            <person name="Zhang Q."/>
        </authorList>
    </citation>
    <scope>NUCLEOTIDE SEQUENCE [GENOMIC DNA]</scope>
    <scope>FUNCTION</scope>
    <source>
        <strain>ATCC 26115 / IMI 115107 / C 1557</strain>
    </source>
</reference>
<reference key="2">
    <citation type="journal article" date="2021" name="Angew. Chem. Int. Ed.">
        <title>Biosynthetic studies of phomopsins unveil posttranslational installation of dehydroamino acids by ustYa family proteins.</title>
        <authorList>
            <person name="Sogahata K."/>
            <person name="Ozaki T."/>
            <person name="Igarashi Y."/>
            <person name="Naganuma Y."/>
            <person name="Liu C."/>
            <person name="Minami A."/>
            <person name="Oikawa H."/>
        </authorList>
    </citation>
    <scope>NOMENCLATURE</scope>
    <source>
        <strain>ATCC 26115 / IMI 115107 / C 1557</strain>
    </source>
</reference>
<organism>
    <name type="scientific">Diaporthe leptostromiformis</name>
    <name type="common">Lupinosis disease fungus</name>
    <name type="synonym">Phomopsis leptostromiformis</name>
    <dbReference type="NCBI Taxonomy" id="291059"/>
    <lineage>
        <taxon>Eukaryota</taxon>
        <taxon>Fungi</taxon>
        <taxon>Dikarya</taxon>
        <taxon>Ascomycota</taxon>
        <taxon>Pezizomycotina</taxon>
        <taxon>Sordariomycetes</taxon>
        <taxon>Sordariomycetidae</taxon>
        <taxon>Diaporthales</taxon>
        <taxon>Diaporthaceae</taxon>
        <taxon>Diaporthe</taxon>
    </lineage>
</organism>
<evidence type="ECO:0000250" key="1">
    <source>
        <dbReference type="UniProtKB" id="L0E2Z4"/>
    </source>
</evidence>
<evidence type="ECO:0000250" key="2">
    <source>
        <dbReference type="UniProtKB" id="O93868"/>
    </source>
</evidence>
<evidence type="ECO:0000255" key="3">
    <source>
        <dbReference type="PROSITE-ProRule" id="PRU10001"/>
    </source>
</evidence>
<evidence type="ECO:0000269" key="4">
    <source>
    </source>
</evidence>
<evidence type="ECO:0000303" key="5">
    <source>
    </source>
</evidence>
<evidence type="ECO:0000303" key="6">
    <source>
    </source>
</evidence>
<evidence type="ECO:0000305" key="7"/>
<evidence type="ECO:0000305" key="8">
    <source>
    </source>
</evidence>
<evidence type="ECO:0000305" key="9">
    <source>
    </source>
</evidence>
<protein>
    <recommendedName>
        <fullName evidence="6">Short-chain dehydrogenase/reductase PhomF'</fullName>
        <ecNumber evidence="8">1.-.-.-</ecNumber>
    </recommendedName>
    <alternativeName>
        <fullName evidence="6">Phomopsin biosynthesis cluster protein F'</fullName>
    </alternativeName>
</protein>
<proteinExistence type="inferred from homology"/>
<accession>A0A142I726</accession>